<gene>
    <name type="primary">yibT</name>
    <name type="ordered locus">Z5025.1</name>
    <name type="ordered locus">ECs4477.1</name>
</gene>
<protein>
    <recommendedName>
        <fullName>Uncharacterized protein YibT</fullName>
    </recommendedName>
</protein>
<proteinExistence type="predicted"/>
<keyword id="KW-1185">Reference proteome</keyword>
<name>YIBT_ECO57</name>
<reference key="1">
    <citation type="journal article" date="2001" name="Nature">
        <title>Genome sequence of enterohaemorrhagic Escherichia coli O157:H7.</title>
        <authorList>
            <person name="Perna N.T."/>
            <person name="Plunkett G. III"/>
            <person name="Burland V."/>
            <person name="Mau B."/>
            <person name="Glasner J.D."/>
            <person name="Rose D.J."/>
            <person name="Mayhew G.F."/>
            <person name="Evans P.S."/>
            <person name="Gregor J."/>
            <person name="Kirkpatrick H.A."/>
            <person name="Posfai G."/>
            <person name="Hackett J."/>
            <person name="Klink S."/>
            <person name="Boutin A."/>
            <person name="Shao Y."/>
            <person name="Miller L."/>
            <person name="Grotbeck E.J."/>
            <person name="Davis N.W."/>
            <person name="Lim A."/>
            <person name="Dimalanta E.T."/>
            <person name="Potamousis K."/>
            <person name="Apodaca J."/>
            <person name="Anantharaman T.S."/>
            <person name="Lin J."/>
            <person name="Yen G."/>
            <person name="Schwartz D.C."/>
            <person name="Welch R.A."/>
            <person name="Blattner F.R."/>
        </authorList>
    </citation>
    <scope>NUCLEOTIDE SEQUENCE [LARGE SCALE GENOMIC DNA]</scope>
    <source>
        <strain>O157:H7 / EDL933 / ATCC 700927 / EHEC</strain>
    </source>
</reference>
<reference key="2">
    <citation type="journal article" date="2001" name="DNA Res.">
        <title>Complete genome sequence of enterohemorrhagic Escherichia coli O157:H7 and genomic comparison with a laboratory strain K-12.</title>
        <authorList>
            <person name="Hayashi T."/>
            <person name="Makino K."/>
            <person name="Ohnishi M."/>
            <person name="Kurokawa K."/>
            <person name="Ishii K."/>
            <person name="Yokoyama K."/>
            <person name="Han C.-G."/>
            <person name="Ohtsubo E."/>
            <person name="Nakayama K."/>
            <person name="Murata T."/>
            <person name="Tanaka M."/>
            <person name="Tobe T."/>
            <person name="Iida T."/>
            <person name="Takami H."/>
            <person name="Honda T."/>
            <person name="Sasakawa C."/>
            <person name="Ogasawara N."/>
            <person name="Yasunaga T."/>
            <person name="Kuhara S."/>
            <person name="Shiba T."/>
            <person name="Hattori M."/>
            <person name="Shinagawa H."/>
        </authorList>
    </citation>
    <scope>NUCLEOTIDE SEQUENCE [LARGE SCALE GENOMIC DNA]</scope>
    <source>
        <strain>O157:H7 / Sakai / RIMD 0509952 / EHEC</strain>
    </source>
</reference>
<sequence length="69" mass="7995">MGKLGENVPLLIDKAVDFMASSQAFREYLKKLPPRNAIPSGIPDESVPLYLQRLEYYRRLYRPKQVEGQ</sequence>
<dbReference type="EMBL" id="AE005174">
    <property type="status" value="NOT_ANNOTATED_CDS"/>
    <property type="molecule type" value="Genomic_DNA"/>
</dbReference>
<dbReference type="EMBL" id="BA000007">
    <property type="status" value="NOT_ANNOTATED_CDS"/>
    <property type="molecule type" value="Genomic_DNA"/>
</dbReference>
<dbReference type="RefSeq" id="WP_000517100.1">
    <property type="nucleotide sequence ID" value="NZ_VOAI01000021.1"/>
</dbReference>
<dbReference type="SMR" id="P0C265"/>
<dbReference type="GeneID" id="93778313"/>
<dbReference type="PATRIC" id="fig|83334.175.peg.2953"/>
<dbReference type="eggNOG" id="ENOG5032Z93">
    <property type="taxonomic scope" value="Bacteria"/>
</dbReference>
<dbReference type="OMA" id="PTCDQQE"/>
<dbReference type="Proteomes" id="UP000000558">
    <property type="component" value="Chromosome"/>
</dbReference>
<dbReference type="Proteomes" id="UP000002519">
    <property type="component" value="Chromosome"/>
</dbReference>
<organism>
    <name type="scientific">Escherichia coli O157:H7</name>
    <dbReference type="NCBI Taxonomy" id="83334"/>
    <lineage>
        <taxon>Bacteria</taxon>
        <taxon>Pseudomonadati</taxon>
        <taxon>Pseudomonadota</taxon>
        <taxon>Gammaproteobacteria</taxon>
        <taxon>Enterobacterales</taxon>
        <taxon>Enterobacteriaceae</taxon>
        <taxon>Escherichia</taxon>
    </lineage>
</organism>
<accession>P0C265</accession>
<feature type="chain" id="PRO_0000263014" description="Uncharacterized protein YibT">
    <location>
        <begin position="1"/>
        <end position="69"/>
    </location>
</feature>